<feature type="peptide" id="PRO_0000395657" description="Tachykinin-related peptide 2" evidence="1">
    <location>
        <begin position="1"/>
        <end position="10"/>
    </location>
</feature>
<feature type="modified residue" description="Arginine amide" evidence="1">
    <location>
        <position position="10"/>
    </location>
</feature>
<name>TRP2_PENRU</name>
<dbReference type="GO" id="GO:0005576">
    <property type="term" value="C:extracellular region"/>
    <property type="evidence" value="ECO:0007005"/>
    <property type="project" value="UniProtKB"/>
</dbReference>
<dbReference type="GO" id="GO:0007218">
    <property type="term" value="P:neuropeptide signaling pathway"/>
    <property type="evidence" value="ECO:0007669"/>
    <property type="project" value="UniProtKB-KW"/>
</dbReference>
<keyword id="KW-0027">Amidation</keyword>
<keyword id="KW-0903">Direct protein sequencing</keyword>
<keyword id="KW-0527">Neuropeptide</keyword>
<keyword id="KW-0964">Secreted</keyword>
<accession>P86588</accession>
<evidence type="ECO:0000269" key="1">
    <source>
    </source>
</evidence>
<evidence type="ECO:0000303" key="2">
    <source>
    </source>
</evidence>
<evidence type="ECO:0000305" key="3"/>
<reference evidence="3" key="1">
    <citation type="journal article" date="2009" name="Peptides">
        <title>Neuropeptides in Heteroptera: identification of allatotropin-related peptide and tachykinin-related peptides using MALDI-TOF mass spectrometry.</title>
        <authorList>
            <person name="Neupert S."/>
            <person name="Russell W.K."/>
            <person name="Russell D.H."/>
            <person name="Lopez J.D. Jr."/>
            <person name="Predel R."/>
            <person name="Nachman R.J."/>
        </authorList>
    </citation>
    <scope>PROTEIN SEQUENCE</scope>
    <scope>SUBCELLULAR LOCATION</scope>
    <scope>TISSUE SPECIFICITY</scope>
    <scope>AMIDATION AT ARG-10</scope>
    <source>
        <tissue evidence="1">Antennal lobe</tissue>
    </source>
</reference>
<organism>
    <name type="scientific">Pentatoma rufipes</name>
    <name type="common">Forest bug</name>
    <name type="synonym">Cimex rufipes</name>
    <dbReference type="NCBI Taxonomy" id="286670"/>
    <lineage>
        <taxon>Eukaryota</taxon>
        <taxon>Metazoa</taxon>
        <taxon>Ecdysozoa</taxon>
        <taxon>Arthropoda</taxon>
        <taxon>Hexapoda</taxon>
        <taxon>Insecta</taxon>
        <taxon>Pterygota</taxon>
        <taxon>Neoptera</taxon>
        <taxon>Paraneoptera</taxon>
        <taxon>Hemiptera</taxon>
        <taxon>Heteroptera</taxon>
        <taxon>Panheteroptera</taxon>
        <taxon>Pentatomomorpha</taxon>
        <taxon>Pentatomoidea</taxon>
        <taxon>Pentatomidae</taxon>
        <taxon>Pentatominae</taxon>
        <taxon>Pentatoma</taxon>
    </lineage>
</organism>
<protein>
    <recommendedName>
        <fullName evidence="2">Tachykinin-related peptide 2</fullName>
        <shortName evidence="2">TKRP-2</shortName>
    </recommendedName>
</protein>
<comment type="subcellular location">
    <subcellularLocation>
        <location evidence="1 3">Secreted</location>
    </subcellularLocation>
</comment>
<comment type="tissue specificity">
    <text evidence="1">Expressed in the antennal lobe (at protein level).</text>
</comment>
<proteinExistence type="evidence at protein level"/>
<sequence>APAAGFFGMR</sequence>